<accession>P63746</accession>
<accession>P76557</accession>
<accession>Q2MAI6</accession>
<reference key="1">
    <citation type="journal article" date="1997" name="Science">
        <title>The complete genome sequence of Escherichia coli K-12.</title>
        <authorList>
            <person name="Blattner F.R."/>
            <person name="Plunkett G. III"/>
            <person name="Bloch C.A."/>
            <person name="Perna N.T."/>
            <person name="Burland V."/>
            <person name="Riley M."/>
            <person name="Collado-Vides J."/>
            <person name="Glasner J.D."/>
            <person name="Rode C.K."/>
            <person name="Mayhew G.F."/>
            <person name="Gregor J."/>
            <person name="Davis N.W."/>
            <person name="Kirkpatrick H.A."/>
            <person name="Goeden M.A."/>
            <person name="Rose D.J."/>
            <person name="Mau B."/>
            <person name="Shao Y."/>
        </authorList>
    </citation>
    <scope>NUCLEOTIDE SEQUENCE [LARGE SCALE GENOMIC DNA]</scope>
    <source>
        <strain>K12 / MG1655 / ATCC 47076</strain>
    </source>
</reference>
<reference key="2">
    <citation type="journal article" date="2006" name="Mol. Syst. Biol.">
        <title>Highly accurate genome sequences of Escherichia coli K-12 strains MG1655 and W3110.</title>
        <authorList>
            <person name="Hayashi K."/>
            <person name="Morooka N."/>
            <person name="Yamamoto Y."/>
            <person name="Fujita K."/>
            <person name="Isono K."/>
            <person name="Choi S."/>
            <person name="Ohtsubo E."/>
            <person name="Baba T."/>
            <person name="Wanner B.L."/>
            <person name="Mori H."/>
            <person name="Horiuchi T."/>
        </authorList>
    </citation>
    <scope>NUCLEOTIDE SEQUENCE [LARGE SCALE GENOMIC DNA]</scope>
    <source>
        <strain>K12 / W3110 / ATCC 27325 / DSM 5911</strain>
    </source>
</reference>
<reference evidence="7 8" key="3">
    <citation type="journal article" date="2010" name="Science">
        <title>Structure and mechanisms of a protein-based organelle in Escherichia coli.</title>
        <authorList>
            <person name="Tanaka S."/>
            <person name="Sawaya M.R."/>
            <person name="Yeates T.O."/>
        </authorList>
    </citation>
    <scope>X-RAY CRYSTALLOGRAPHY (1.65 ANGSTROMS)</scope>
    <scope>FUNCTION</scope>
    <scope>SUBUNIT</scope>
    <scope>SUBCELLULAR LOCATION</scope>
    <scope>DOMAIN</scope>
    <scope>MUTAGENESIS OF GLY-39</scope>
    <source>
        <strain>K12</strain>
    </source>
</reference>
<comment type="function">
    <text evidence="1 4 5">A component of the bacterial microcompartment (BMC) shell dedicated to ethanolamine degradation. Its unusual hexameric shape may help form the BMC shell (Probable). Targets at least 2 proteins (EutC and EutE) to the interior of the BMC (By similarity). Proteins such as EutS containing circularly permuted BMC domains may play a key role in conferring heterogeneity and flexibility in this BMC (Probable).</text>
</comment>
<comment type="pathway">
    <text>Amine and polyamine degradation; ethanolamine degradation.</text>
</comment>
<comment type="subunit">
    <text evidence="1 3">Homohexamer with a central pore; the hexamer is not symmetric, it is bent by about 40 degrees; bending depends on Gly-39 (PubMed:20044574). Interacts with the N-terminus of EutC and of EutE, targeting them to the interior of the BMC (By similarity).</text>
</comment>
<comment type="interaction">
    <interactant intactId="EBI-1128985">
        <id>P63746</id>
    </interactant>
    <interactant intactId="EBI-1128985">
        <id>P63746</id>
        <label>eutS</label>
    </interactant>
    <organismsDiffer>false</organismsDiffer>
    <experiments>2</experiments>
</comment>
<comment type="subcellular location">
    <subcellularLocation>
        <location evidence="5">Bacterial microcompartment</location>
    </subcellularLocation>
</comment>
<comment type="domain">
    <text evidence="3">One side of the hexamer is concave and lined by hydrophobic residues, the other side has a slightly protruding, 6-stranded beta-barrel.</text>
</comment>
<comment type="similarity">
    <text evidence="2">Belongs to the EutS/PduU family.</text>
</comment>
<comment type="caution">
    <text evidence="6">In strain MG1655 the eut operon is interrupted by the CPZ-55 prophage, encoding 9 genes situated between eutA and eutB, which are translated in the other direction. CPZ-55 may prevent expression of the eut operon in strain MG1655. Strain W3110 does not have this prophage element and should be able to express the operon.</text>
</comment>
<proteinExistence type="evidence at protein level"/>
<feature type="chain" id="PRO_0000201520" description="Bacterial microcompartment shell protein EutS">
    <location>
        <begin position="1"/>
        <end position="111"/>
    </location>
</feature>
<feature type="domain" description="BMC circularly permuted" evidence="2">
    <location>
        <begin position="5"/>
        <end position="103"/>
    </location>
</feature>
<feature type="mutagenesis site" description="Crystallizes as a symmetric hexamer, migrates more slowly in native gels." evidence="3">
    <original>G</original>
    <variation>V</variation>
    <location>
        <position position="39"/>
    </location>
</feature>
<feature type="strand" evidence="9">
    <location>
        <begin position="8"/>
        <end position="12"/>
    </location>
</feature>
<feature type="strand" evidence="9">
    <location>
        <begin position="15"/>
        <end position="23"/>
    </location>
</feature>
<feature type="helix" evidence="9">
    <location>
        <begin position="27"/>
        <end position="33"/>
    </location>
</feature>
<feature type="strand" evidence="9">
    <location>
        <begin position="39"/>
        <end position="48"/>
    </location>
</feature>
<feature type="helix" evidence="9">
    <location>
        <begin position="51"/>
        <end position="62"/>
    </location>
</feature>
<feature type="strand" evidence="9">
    <location>
        <begin position="63"/>
        <end position="70"/>
    </location>
</feature>
<feature type="turn" evidence="9">
    <location>
        <begin position="72"/>
        <end position="74"/>
    </location>
</feature>
<feature type="strand" evidence="9">
    <location>
        <begin position="76"/>
        <end position="81"/>
    </location>
</feature>
<feature type="helix" evidence="9">
    <location>
        <begin position="83"/>
        <end position="101"/>
    </location>
</feature>
<feature type="strand" evidence="9">
    <location>
        <begin position="109"/>
        <end position="111"/>
    </location>
</feature>
<protein>
    <recommendedName>
        <fullName>Bacterial microcompartment shell protein EutS</fullName>
    </recommendedName>
    <alternativeName>
        <fullName>Ethanolamine utilization protein EutS</fullName>
    </alternativeName>
</protein>
<gene>
    <name type="primary">eutS</name>
    <name type="synonym">ypfE</name>
    <name type="ordered locus">b2462</name>
    <name type="ordered locus">JW2446</name>
</gene>
<dbReference type="EMBL" id="U00096">
    <property type="protein sequence ID" value="AAC75515.2"/>
    <property type="molecule type" value="Genomic_DNA"/>
</dbReference>
<dbReference type="EMBL" id="AP009048">
    <property type="protein sequence ID" value="BAE76720.1"/>
    <property type="molecule type" value="Genomic_DNA"/>
</dbReference>
<dbReference type="RefSeq" id="NP_416957.4">
    <property type="nucleotide sequence ID" value="NC_000913.3"/>
</dbReference>
<dbReference type="RefSeq" id="WP_000356956.1">
    <property type="nucleotide sequence ID" value="NZ_STEB01000051.1"/>
</dbReference>
<dbReference type="PDB" id="3I96">
    <property type="method" value="X-ray"/>
    <property type="resolution" value="1.65 A"/>
    <property type="chains" value="A/B/C=1-111"/>
</dbReference>
<dbReference type="PDB" id="3IA0">
    <property type="method" value="X-ray"/>
    <property type="resolution" value="2.50 A"/>
    <property type="chains" value="A/B/C/D/E/F/G/H/I/J/K/L/M/N/O/P/Q/R/S/T/U/V/W/X/Y/Z/a/b/c/d/e/f/g/h/i/j/k/l/m/n/o/p/q/r/s/t/u/v=1-111"/>
</dbReference>
<dbReference type="PDBsum" id="3I96"/>
<dbReference type="PDBsum" id="3IA0"/>
<dbReference type="SMR" id="P63746"/>
<dbReference type="BioGRID" id="4260922">
    <property type="interactions" value="19"/>
</dbReference>
<dbReference type="BioGRID" id="851275">
    <property type="interactions" value="1"/>
</dbReference>
<dbReference type="FunCoup" id="P63746">
    <property type="interactions" value="34"/>
</dbReference>
<dbReference type="IntAct" id="P63746">
    <property type="interactions" value="9"/>
</dbReference>
<dbReference type="STRING" id="511145.b2462"/>
<dbReference type="PaxDb" id="511145-b2462"/>
<dbReference type="EnsemblBacteria" id="AAC75515">
    <property type="protein sequence ID" value="AAC75515"/>
    <property type="gene ID" value="b2462"/>
</dbReference>
<dbReference type="GeneID" id="86860593"/>
<dbReference type="GeneID" id="946936"/>
<dbReference type="KEGG" id="ecj:JW2446"/>
<dbReference type="KEGG" id="eco:b2462"/>
<dbReference type="KEGG" id="ecoc:C3026_13660"/>
<dbReference type="PATRIC" id="fig|1411691.4.peg.4278"/>
<dbReference type="EchoBASE" id="EB3944"/>
<dbReference type="eggNOG" id="COG4810">
    <property type="taxonomic scope" value="Bacteria"/>
</dbReference>
<dbReference type="HOGENOM" id="CLU_143326_0_0_6"/>
<dbReference type="InParanoid" id="P63746"/>
<dbReference type="OMA" id="IHRIMNT"/>
<dbReference type="OrthoDB" id="5457140at2"/>
<dbReference type="PhylomeDB" id="P63746"/>
<dbReference type="BioCyc" id="EcoCyc:G7292-MONOMER"/>
<dbReference type="UniPathway" id="UPA00560"/>
<dbReference type="EvolutionaryTrace" id="P63746"/>
<dbReference type="PRO" id="PR:P63746"/>
<dbReference type="Proteomes" id="UP000000625">
    <property type="component" value="Chromosome"/>
</dbReference>
<dbReference type="GO" id="GO:0031471">
    <property type="term" value="C:ethanolamine degradation polyhedral organelle"/>
    <property type="evidence" value="ECO:0000250"/>
    <property type="project" value="EcoCyc"/>
</dbReference>
<dbReference type="GO" id="GO:0042802">
    <property type="term" value="F:identical protein binding"/>
    <property type="evidence" value="ECO:0000314"/>
    <property type="project" value="EcoCyc"/>
</dbReference>
<dbReference type="GO" id="GO:0005198">
    <property type="term" value="F:structural molecule activity"/>
    <property type="evidence" value="ECO:0000250"/>
    <property type="project" value="EcoCyc"/>
</dbReference>
<dbReference type="GO" id="GO:0046336">
    <property type="term" value="P:ethanolamine catabolic process"/>
    <property type="evidence" value="ECO:0007669"/>
    <property type="project" value="UniProtKB-UniPathway"/>
</dbReference>
<dbReference type="GO" id="GO:0034214">
    <property type="term" value="P:protein hexamerization"/>
    <property type="evidence" value="ECO:0000314"/>
    <property type="project" value="EcoCyc"/>
</dbReference>
<dbReference type="CDD" id="cd07046">
    <property type="entry name" value="BMC_PduU-EutS"/>
    <property type="match status" value="1"/>
</dbReference>
<dbReference type="FunFam" id="3.30.70.1710:FF:000002">
    <property type="entry name" value="Ethanolamine utilization protein EutS"/>
    <property type="match status" value="1"/>
</dbReference>
<dbReference type="Gene3D" id="3.30.70.1710">
    <property type="match status" value="1"/>
</dbReference>
<dbReference type="InterPro" id="IPR044870">
    <property type="entry name" value="BMC_CP"/>
</dbReference>
<dbReference type="InterPro" id="IPR000249">
    <property type="entry name" value="BMC_dom"/>
</dbReference>
<dbReference type="InterPro" id="IPR037233">
    <property type="entry name" value="CcmK-like_sf"/>
</dbReference>
<dbReference type="InterPro" id="IPR009307">
    <property type="entry name" value="EutS/PduU/CutR"/>
</dbReference>
<dbReference type="NCBIfam" id="NF012012">
    <property type="entry name" value="PRK15468.1"/>
    <property type="match status" value="1"/>
</dbReference>
<dbReference type="PANTHER" id="PTHR40449:SF2">
    <property type="entry name" value="BACTERIAL MICROCOMPARTMENT SHELL PROTEIN EUTS"/>
    <property type="match status" value="1"/>
</dbReference>
<dbReference type="PANTHER" id="PTHR40449">
    <property type="entry name" value="ETHANOLAMINE UTILIZATION PROTEIN EUTS"/>
    <property type="match status" value="1"/>
</dbReference>
<dbReference type="Pfam" id="PF00936">
    <property type="entry name" value="BMC"/>
    <property type="match status" value="1"/>
</dbReference>
<dbReference type="PIRSF" id="PIRSF012296">
    <property type="entry name" value="EutS_PduU"/>
    <property type="match status" value="1"/>
</dbReference>
<dbReference type="SMART" id="SM00877">
    <property type="entry name" value="BMC"/>
    <property type="match status" value="1"/>
</dbReference>
<dbReference type="SUPFAM" id="SSF143414">
    <property type="entry name" value="CcmK-like"/>
    <property type="match status" value="1"/>
</dbReference>
<dbReference type="PROSITE" id="PS51931">
    <property type="entry name" value="BMC_CP"/>
    <property type="match status" value="1"/>
</dbReference>
<organism>
    <name type="scientific">Escherichia coli (strain K12)</name>
    <dbReference type="NCBI Taxonomy" id="83333"/>
    <lineage>
        <taxon>Bacteria</taxon>
        <taxon>Pseudomonadati</taxon>
        <taxon>Pseudomonadota</taxon>
        <taxon>Gammaproteobacteria</taxon>
        <taxon>Enterobacterales</taxon>
        <taxon>Enterobacteriaceae</taxon>
        <taxon>Escherichia</taxon>
    </lineage>
</organism>
<sequence length="111" mass="11650">MDKERIIQEFVPGKQVTLAHLIAHPGEELAKKIGVPDAGAIGIMTLTPGETAMIAGDLALKAADVHIGFLDRFSGALVIYGSVGAVEEALSQTVSGLGRLLNYTLCEMTKS</sequence>
<keyword id="KW-0002">3D-structure</keyword>
<keyword id="KW-1283">Bacterial microcompartment</keyword>
<keyword id="KW-1185">Reference proteome</keyword>
<name>EUTS_ECOLI</name>
<evidence type="ECO:0000250" key="1">
    <source>
        <dbReference type="UniProtKB" id="Q9ZFV7"/>
    </source>
</evidence>
<evidence type="ECO:0000255" key="2">
    <source>
        <dbReference type="PROSITE-ProRule" id="PRU01279"/>
    </source>
</evidence>
<evidence type="ECO:0000269" key="3">
    <source>
    </source>
</evidence>
<evidence type="ECO:0000305" key="4"/>
<evidence type="ECO:0000305" key="5">
    <source>
    </source>
</evidence>
<evidence type="ECO:0000305" key="6">
    <source>
    </source>
</evidence>
<evidence type="ECO:0007744" key="7">
    <source>
        <dbReference type="PDB" id="3I96"/>
    </source>
</evidence>
<evidence type="ECO:0007744" key="8">
    <source>
        <dbReference type="PDB" id="3IA0"/>
    </source>
</evidence>
<evidence type="ECO:0007829" key="9">
    <source>
        <dbReference type="PDB" id="3I96"/>
    </source>
</evidence>